<proteinExistence type="evidence at protein level"/>
<comment type="interaction">
    <interactant intactId="EBI-20832568">
        <id>Q96BQ1</id>
    </interactant>
    <interactant intactId="EBI-7813714">
        <id>Q13563</id>
        <label>PKD2</label>
    </interactant>
    <organismsDiffer>false</organismsDiffer>
    <experiments>2</experiments>
</comment>
<comment type="subcellular location">
    <subcellularLocation>
        <location evidence="6">Secreted</location>
    </subcellularLocation>
</comment>
<comment type="tissue specificity">
    <text evidence="4">Abundantly expressed in placenta and weakly expressed in small intestine.</text>
</comment>
<comment type="similarity">
    <text evidence="6">Belongs to the FAM3 family.</text>
</comment>
<name>FAM3D_HUMAN</name>
<feature type="signal peptide" evidence="2">
    <location>
        <begin position="1"/>
        <end position="25"/>
    </location>
</feature>
<feature type="chain" id="PRO_0000008754" description="Protein FAM3D">
    <location>
        <begin position="26"/>
        <end position="224"/>
    </location>
</feature>
<feature type="domain" description="GG-type lectin" evidence="3">
    <location>
        <begin position="64"/>
        <end position="222"/>
    </location>
</feature>
<feature type="glycosylation site" description="N-linked (GlcNAc...) asparagine" evidence="5">
    <location>
        <position position="107"/>
    </location>
</feature>
<feature type="disulfide bond" evidence="1">
    <location>
        <begin position="55"/>
        <end position="83"/>
    </location>
</feature>
<feature type="disulfide bond" evidence="1">
    <location>
        <begin position="61"/>
        <end position="218"/>
    </location>
</feature>
<feature type="sequence variant" id="VAR_053087" description="In dbSNP:rs17059569.">
    <original>P</original>
    <variation>S</variation>
    <location>
        <position position="60"/>
    </location>
</feature>
<feature type="sequence variant" id="VAR_053088" description="In dbSNP:rs33966924.">
    <original>A</original>
    <variation>S</variation>
    <location>
        <position position="118"/>
    </location>
</feature>
<accession>Q96BQ1</accession>
<accession>Q547G2</accession>
<reference key="1">
    <citation type="journal article" date="2002" name="Genomics">
        <title>Cloning, expression, and initial characterization of a novel cytokine-like gene family.</title>
        <authorList>
            <person name="Zhu Y."/>
            <person name="Xu G."/>
            <person name="Patel A."/>
            <person name="McLaughlin M.M."/>
            <person name="Silverman C."/>
            <person name="Knecht K.A."/>
            <person name="Sweitzer S."/>
            <person name="Li X."/>
            <person name="McDonnell P."/>
            <person name="Mirabile R."/>
            <person name="Zimmerman D."/>
            <person name="Boyce R."/>
            <person name="Tierney L.A."/>
            <person name="Hu E."/>
            <person name="Livi G.P."/>
            <person name="Wolf B.A."/>
            <person name="Abdel-Meguid S.S."/>
            <person name="Rose G.D."/>
            <person name="Aurora R."/>
            <person name="Hensley P."/>
            <person name="Briggs M."/>
            <person name="Young P.R."/>
        </authorList>
    </citation>
    <scope>NUCLEOTIDE SEQUENCE [MRNA]</scope>
    <scope>TISSUE SPECIFICITY</scope>
</reference>
<reference key="2">
    <citation type="journal article" date="2003" name="Genome Res.">
        <title>The secreted protein discovery initiative (SPDI), a large-scale effort to identify novel human secreted and transmembrane proteins: a bioinformatics assessment.</title>
        <authorList>
            <person name="Clark H.F."/>
            <person name="Gurney A.L."/>
            <person name="Abaya E."/>
            <person name="Baker K."/>
            <person name="Baldwin D.T."/>
            <person name="Brush J."/>
            <person name="Chen J."/>
            <person name="Chow B."/>
            <person name="Chui C."/>
            <person name="Crowley C."/>
            <person name="Currell B."/>
            <person name="Deuel B."/>
            <person name="Dowd P."/>
            <person name="Eaton D."/>
            <person name="Foster J.S."/>
            <person name="Grimaldi C."/>
            <person name="Gu Q."/>
            <person name="Hass P.E."/>
            <person name="Heldens S."/>
            <person name="Huang A."/>
            <person name="Kim H.S."/>
            <person name="Klimowski L."/>
            <person name="Jin Y."/>
            <person name="Johnson S."/>
            <person name="Lee J."/>
            <person name="Lewis L."/>
            <person name="Liao D."/>
            <person name="Mark M.R."/>
            <person name="Robbie E."/>
            <person name="Sanchez C."/>
            <person name="Schoenfeld J."/>
            <person name="Seshagiri S."/>
            <person name="Simmons L."/>
            <person name="Singh J."/>
            <person name="Smith V."/>
            <person name="Stinson J."/>
            <person name="Vagts A."/>
            <person name="Vandlen R.L."/>
            <person name="Watanabe C."/>
            <person name="Wieand D."/>
            <person name="Woods K."/>
            <person name="Xie M.-H."/>
            <person name="Yansura D.G."/>
            <person name="Yi S."/>
            <person name="Yu G."/>
            <person name="Yuan J."/>
            <person name="Zhang M."/>
            <person name="Zhang Z."/>
            <person name="Goddard A.D."/>
            <person name="Wood W.I."/>
            <person name="Godowski P.J."/>
            <person name="Gray A.M."/>
        </authorList>
    </citation>
    <scope>NUCLEOTIDE SEQUENCE [LARGE SCALE MRNA]</scope>
</reference>
<reference key="3">
    <citation type="journal article" date="2004" name="Nat. Genet.">
        <title>Complete sequencing and characterization of 21,243 full-length human cDNAs.</title>
        <authorList>
            <person name="Ota T."/>
            <person name="Suzuki Y."/>
            <person name="Nishikawa T."/>
            <person name="Otsuki T."/>
            <person name="Sugiyama T."/>
            <person name="Irie R."/>
            <person name="Wakamatsu A."/>
            <person name="Hayashi K."/>
            <person name="Sato H."/>
            <person name="Nagai K."/>
            <person name="Kimura K."/>
            <person name="Makita H."/>
            <person name="Sekine M."/>
            <person name="Obayashi M."/>
            <person name="Nishi T."/>
            <person name="Shibahara T."/>
            <person name="Tanaka T."/>
            <person name="Ishii S."/>
            <person name="Yamamoto J."/>
            <person name="Saito K."/>
            <person name="Kawai Y."/>
            <person name="Isono Y."/>
            <person name="Nakamura Y."/>
            <person name="Nagahari K."/>
            <person name="Murakami K."/>
            <person name="Yasuda T."/>
            <person name="Iwayanagi T."/>
            <person name="Wagatsuma M."/>
            <person name="Shiratori A."/>
            <person name="Sudo H."/>
            <person name="Hosoiri T."/>
            <person name="Kaku Y."/>
            <person name="Kodaira H."/>
            <person name="Kondo H."/>
            <person name="Sugawara M."/>
            <person name="Takahashi M."/>
            <person name="Kanda K."/>
            <person name="Yokoi T."/>
            <person name="Furuya T."/>
            <person name="Kikkawa E."/>
            <person name="Omura Y."/>
            <person name="Abe K."/>
            <person name="Kamihara K."/>
            <person name="Katsuta N."/>
            <person name="Sato K."/>
            <person name="Tanikawa M."/>
            <person name="Yamazaki M."/>
            <person name="Ninomiya K."/>
            <person name="Ishibashi T."/>
            <person name="Yamashita H."/>
            <person name="Murakawa K."/>
            <person name="Fujimori K."/>
            <person name="Tanai H."/>
            <person name="Kimata M."/>
            <person name="Watanabe M."/>
            <person name="Hiraoka S."/>
            <person name="Chiba Y."/>
            <person name="Ishida S."/>
            <person name="Ono Y."/>
            <person name="Takiguchi S."/>
            <person name="Watanabe S."/>
            <person name="Yosida M."/>
            <person name="Hotuta T."/>
            <person name="Kusano J."/>
            <person name="Kanehori K."/>
            <person name="Takahashi-Fujii A."/>
            <person name="Hara H."/>
            <person name="Tanase T.-O."/>
            <person name="Nomura Y."/>
            <person name="Togiya S."/>
            <person name="Komai F."/>
            <person name="Hara R."/>
            <person name="Takeuchi K."/>
            <person name="Arita M."/>
            <person name="Imose N."/>
            <person name="Musashino K."/>
            <person name="Yuuki H."/>
            <person name="Oshima A."/>
            <person name="Sasaki N."/>
            <person name="Aotsuka S."/>
            <person name="Yoshikawa Y."/>
            <person name="Matsunawa H."/>
            <person name="Ichihara T."/>
            <person name="Shiohata N."/>
            <person name="Sano S."/>
            <person name="Moriya S."/>
            <person name="Momiyama H."/>
            <person name="Satoh N."/>
            <person name="Takami S."/>
            <person name="Terashima Y."/>
            <person name="Suzuki O."/>
            <person name="Nakagawa S."/>
            <person name="Senoh A."/>
            <person name="Mizoguchi H."/>
            <person name="Goto Y."/>
            <person name="Shimizu F."/>
            <person name="Wakebe H."/>
            <person name="Hishigaki H."/>
            <person name="Watanabe T."/>
            <person name="Sugiyama A."/>
            <person name="Takemoto M."/>
            <person name="Kawakami B."/>
            <person name="Yamazaki M."/>
            <person name="Watanabe K."/>
            <person name="Kumagai A."/>
            <person name="Itakura S."/>
            <person name="Fukuzumi Y."/>
            <person name="Fujimori Y."/>
            <person name="Komiyama M."/>
            <person name="Tashiro H."/>
            <person name="Tanigami A."/>
            <person name="Fujiwara T."/>
            <person name="Ono T."/>
            <person name="Yamada K."/>
            <person name="Fujii Y."/>
            <person name="Ozaki K."/>
            <person name="Hirao M."/>
            <person name="Ohmori Y."/>
            <person name="Kawabata A."/>
            <person name="Hikiji T."/>
            <person name="Kobatake N."/>
            <person name="Inagaki H."/>
            <person name="Ikema Y."/>
            <person name="Okamoto S."/>
            <person name="Okitani R."/>
            <person name="Kawakami T."/>
            <person name="Noguchi S."/>
            <person name="Itoh T."/>
            <person name="Shigeta K."/>
            <person name="Senba T."/>
            <person name="Matsumura K."/>
            <person name="Nakajima Y."/>
            <person name="Mizuno T."/>
            <person name="Morinaga M."/>
            <person name="Sasaki M."/>
            <person name="Togashi T."/>
            <person name="Oyama M."/>
            <person name="Hata H."/>
            <person name="Watanabe M."/>
            <person name="Komatsu T."/>
            <person name="Mizushima-Sugano J."/>
            <person name="Satoh T."/>
            <person name="Shirai Y."/>
            <person name="Takahashi Y."/>
            <person name="Nakagawa K."/>
            <person name="Okumura K."/>
            <person name="Nagase T."/>
            <person name="Nomura N."/>
            <person name="Kikuchi H."/>
            <person name="Masuho Y."/>
            <person name="Yamashita R."/>
            <person name="Nakai K."/>
            <person name="Yada T."/>
            <person name="Nakamura Y."/>
            <person name="Ohara O."/>
            <person name="Isogai T."/>
            <person name="Sugano S."/>
        </authorList>
    </citation>
    <scope>NUCLEOTIDE SEQUENCE [LARGE SCALE MRNA]</scope>
    <source>
        <tissue>Colon</tissue>
    </source>
</reference>
<reference key="4">
    <citation type="submission" date="2005-07" db="EMBL/GenBank/DDBJ databases">
        <authorList>
            <person name="Mural R.J."/>
            <person name="Istrail S."/>
            <person name="Sutton G.G."/>
            <person name="Florea L."/>
            <person name="Halpern A.L."/>
            <person name="Mobarry C.M."/>
            <person name="Lippert R."/>
            <person name="Walenz B."/>
            <person name="Shatkay H."/>
            <person name="Dew I."/>
            <person name="Miller J.R."/>
            <person name="Flanigan M.J."/>
            <person name="Edwards N.J."/>
            <person name="Bolanos R."/>
            <person name="Fasulo D."/>
            <person name="Halldorsson B.V."/>
            <person name="Hannenhalli S."/>
            <person name="Turner R."/>
            <person name="Yooseph S."/>
            <person name="Lu F."/>
            <person name="Nusskern D.R."/>
            <person name="Shue B.C."/>
            <person name="Zheng X.H."/>
            <person name="Zhong F."/>
            <person name="Delcher A.L."/>
            <person name="Huson D.H."/>
            <person name="Kravitz S.A."/>
            <person name="Mouchard L."/>
            <person name="Reinert K."/>
            <person name="Remington K.A."/>
            <person name="Clark A.G."/>
            <person name="Waterman M.S."/>
            <person name="Eichler E.E."/>
            <person name="Adams M.D."/>
            <person name="Hunkapiller M.W."/>
            <person name="Myers E.W."/>
            <person name="Venter J.C."/>
        </authorList>
    </citation>
    <scope>NUCLEOTIDE SEQUENCE [LARGE SCALE GENOMIC DNA]</scope>
</reference>
<reference key="5">
    <citation type="journal article" date="2004" name="Genome Res.">
        <title>The status, quality, and expansion of the NIH full-length cDNA project: the Mammalian Gene Collection (MGC).</title>
        <authorList>
            <consortium name="The MGC Project Team"/>
        </authorList>
    </citation>
    <scope>NUCLEOTIDE SEQUENCE [LARGE SCALE MRNA]</scope>
    <source>
        <tissue>Colon</tissue>
    </source>
</reference>
<reference key="6">
    <citation type="journal article" date="2006" name="J. Proteome Res.">
        <title>Identification of N-linked glycoproteins in human saliva by glycoprotein capture and mass spectrometry.</title>
        <authorList>
            <person name="Ramachandran P."/>
            <person name="Boontheung P."/>
            <person name="Xie Y."/>
            <person name="Sondej M."/>
            <person name="Wong D.T."/>
            <person name="Loo J.A."/>
        </authorList>
    </citation>
    <scope>GLYCOSYLATION [LARGE SCALE ANALYSIS] AT ASN-107</scope>
    <source>
        <tissue>Saliva</tissue>
    </source>
</reference>
<dbReference type="EMBL" id="AF494381">
    <property type="protein sequence ID" value="AAM94282.1"/>
    <property type="molecule type" value="mRNA"/>
</dbReference>
<dbReference type="EMBL" id="AY358677">
    <property type="protein sequence ID" value="AAQ89040.1"/>
    <property type="molecule type" value="mRNA"/>
</dbReference>
<dbReference type="EMBL" id="AK127546">
    <property type="protein sequence ID" value="BAG54521.1"/>
    <property type="molecule type" value="mRNA"/>
</dbReference>
<dbReference type="EMBL" id="CH471055">
    <property type="protein sequence ID" value="EAW65382.1"/>
    <property type="molecule type" value="Genomic_DNA"/>
</dbReference>
<dbReference type="EMBL" id="BC015359">
    <property type="protein sequence ID" value="AAH15359.1"/>
    <property type="molecule type" value="mRNA"/>
</dbReference>
<dbReference type="CCDS" id="CCDS2893.1"/>
<dbReference type="RefSeq" id="NP_620160.1">
    <property type="nucleotide sequence ID" value="NM_138805.3"/>
</dbReference>
<dbReference type="RefSeq" id="XP_005264919.1">
    <property type="nucleotide sequence ID" value="XM_005264862.5"/>
</dbReference>
<dbReference type="RefSeq" id="XP_006713028.1">
    <property type="nucleotide sequence ID" value="XM_006712965.4"/>
</dbReference>
<dbReference type="RefSeq" id="XP_011531653.1">
    <property type="nucleotide sequence ID" value="XM_011533351.3"/>
</dbReference>
<dbReference type="RefSeq" id="XP_054201177.1">
    <property type="nucleotide sequence ID" value="XM_054345202.1"/>
</dbReference>
<dbReference type="RefSeq" id="XP_054201178.1">
    <property type="nucleotide sequence ID" value="XM_054345203.1"/>
</dbReference>
<dbReference type="RefSeq" id="XP_054201179.1">
    <property type="nucleotide sequence ID" value="XM_054345204.1"/>
</dbReference>
<dbReference type="SMR" id="Q96BQ1"/>
<dbReference type="BioGRID" id="126274">
    <property type="interactions" value="8"/>
</dbReference>
<dbReference type="FunCoup" id="Q96BQ1">
    <property type="interactions" value="212"/>
</dbReference>
<dbReference type="IntAct" id="Q96BQ1">
    <property type="interactions" value="7"/>
</dbReference>
<dbReference type="STRING" id="9606.ENSP00000351632"/>
<dbReference type="GlyConnect" id="1659">
    <property type="glycosylation" value="2 N-Linked glycans (1 site)"/>
</dbReference>
<dbReference type="GlyCosmos" id="Q96BQ1">
    <property type="glycosylation" value="1 site, 1 glycan"/>
</dbReference>
<dbReference type="GlyGen" id="Q96BQ1">
    <property type="glycosylation" value="3 sites, 1 N-linked glycan (1 site), 1 O-linked glycan (1 site)"/>
</dbReference>
<dbReference type="iPTMnet" id="Q96BQ1"/>
<dbReference type="PhosphoSitePlus" id="Q96BQ1"/>
<dbReference type="BioMuta" id="FAM3D"/>
<dbReference type="jPOST" id="Q96BQ1"/>
<dbReference type="MassIVE" id="Q96BQ1"/>
<dbReference type="PaxDb" id="9606-ENSP00000351632"/>
<dbReference type="PeptideAtlas" id="Q96BQ1"/>
<dbReference type="ProteomicsDB" id="76097"/>
<dbReference type="Pumba" id="Q96BQ1"/>
<dbReference type="Antibodypedia" id="31681">
    <property type="antibodies" value="178 antibodies from 28 providers"/>
</dbReference>
<dbReference type="DNASU" id="131177"/>
<dbReference type="Ensembl" id="ENST00000358781.7">
    <property type="protein sequence ID" value="ENSP00000351632.2"/>
    <property type="gene ID" value="ENSG00000198643.7"/>
</dbReference>
<dbReference type="GeneID" id="131177"/>
<dbReference type="KEGG" id="hsa:131177"/>
<dbReference type="MANE-Select" id="ENST00000358781.7">
    <property type="protein sequence ID" value="ENSP00000351632.2"/>
    <property type="RefSeq nucleotide sequence ID" value="NM_138805.3"/>
    <property type="RefSeq protein sequence ID" value="NP_620160.1"/>
</dbReference>
<dbReference type="UCSC" id="uc003dkq.4">
    <property type="organism name" value="human"/>
</dbReference>
<dbReference type="AGR" id="HGNC:18665"/>
<dbReference type="CTD" id="131177"/>
<dbReference type="DisGeNET" id="131177"/>
<dbReference type="GeneCards" id="FAM3D"/>
<dbReference type="HGNC" id="HGNC:18665">
    <property type="gene designation" value="FAM3D"/>
</dbReference>
<dbReference type="HPA" id="ENSG00000198643">
    <property type="expression patterns" value="Group enriched (esophagus, intestine, salivary gland)"/>
</dbReference>
<dbReference type="MIM" id="608619">
    <property type="type" value="gene"/>
</dbReference>
<dbReference type="neXtProt" id="NX_Q96BQ1"/>
<dbReference type="OpenTargets" id="ENSG00000198643"/>
<dbReference type="PharmGKB" id="PA38628"/>
<dbReference type="VEuPathDB" id="HostDB:ENSG00000198643"/>
<dbReference type="eggNOG" id="ENOG502RCCI">
    <property type="taxonomic scope" value="Eukaryota"/>
</dbReference>
<dbReference type="GeneTree" id="ENSGT00950000183004"/>
<dbReference type="HOGENOM" id="CLU_099478_0_1_1"/>
<dbReference type="InParanoid" id="Q96BQ1"/>
<dbReference type="OMA" id="MCFENQI"/>
<dbReference type="OrthoDB" id="440755at2759"/>
<dbReference type="PAN-GO" id="Q96BQ1">
    <property type="GO annotations" value="1 GO annotation based on evolutionary models"/>
</dbReference>
<dbReference type="PhylomeDB" id="Q96BQ1"/>
<dbReference type="TreeFam" id="TF353414"/>
<dbReference type="PathwayCommons" id="Q96BQ1"/>
<dbReference type="SignaLink" id="Q96BQ1"/>
<dbReference type="BioGRID-ORCS" id="131177">
    <property type="hits" value="7 hits in 1145 CRISPR screens"/>
</dbReference>
<dbReference type="ChiTaRS" id="FAM3D">
    <property type="organism name" value="human"/>
</dbReference>
<dbReference type="GenomeRNAi" id="131177"/>
<dbReference type="Pharos" id="Q96BQ1">
    <property type="development level" value="Tbio"/>
</dbReference>
<dbReference type="PRO" id="PR:Q96BQ1"/>
<dbReference type="Proteomes" id="UP000005640">
    <property type="component" value="Chromosome 3"/>
</dbReference>
<dbReference type="RNAct" id="Q96BQ1">
    <property type="molecule type" value="protein"/>
</dbReference>
<dbReference type="Bgee" id="ENSG00000198643">
    <property type="expression patterns" value="Expressed in lower esophagus mucosa and 141 other cell types or tissues"/>
</dbReference>
<dbReference type="ExpressionAtlas" id="Q96BQ1">
    <property type="expression patterns" value="baseline and differential"/>
</dbReference>
<dbReference type="GO" id="GO:0005576">
    <property type="term" value="C:extracellular region"/>
    <property type="evidence" value="ECO:0000303"/>
    <property type="project" value="UniProtKB"/>
</dbReference>
<dbReference type="GO" id="GO:0005615">
    <property type="term" value="C:extracellular space"/>
    <property type="evidence" value="ECO:0000318"/>
    <property type="project" value="GO_Central"/>
</dbReference>
<dbReference type="GO" id="GO:0030246">
    <property type="term" value="F:carbohydrate binding"/>
    <property type="evidence" value="ECO:0007669"/>
    <property type="project" value="UniProtKB-KW"/>
</dbReference>
<dbReference type="GO" id="GO:0005125">
    <property type="term" value="F:cytokine activity"/>
    <property type="evidence" value="ECO:0000303"/>
    <property type="project" value="UniProtKB"/>
</dbReference>
<dbReference type="GO" id="GO:0035904">
    <property type="term" value="P:aorta development"/>
    <property type="evidence" value="ECO:0007669"/>
    <property type="project" value="Ensembl"/>
</dbReference>
<dbReference type="GO" id="GO:0046676">
    <property type="term" value="P:negative regulation of insulin secretion"/>
    <property type="evidence" value="ECO:0000314"/>
    <property type="project" value="UniProtKB"/>
</dbReference>
<dbReference type="GO" id="GO:0001780">
    <property type="term" value="P:neutrophil homeostasis"/>
    <property type="evidence" value="ECO:0007669"/>
    <property type="project" value="Ensembl"/>
</dbReference>
<dbReference type="GO" id="GO:1990266">
    <property type="term" value="P:neutrophil migration"/>
    <property type="evidence" value="ECO:0007669"/>
    <property type="project" value="Ensembl"/>
</dbReference>
<dbReference type="GO" id="GO:0002618">
    <property type="term" value="P:positive regulation of macrophage antigen processing and presentation"/>
    <property type="evidence" value="ECO:0007669"/>
    <property type="project" value="Ensembl"/>
</dbReference>
<dbReference type="CDD" id="cd13940">
    <property type="entry name" value="ILEI_FAM3C"/>
    <property type="match status" value="1"/>
</dbReference>
<dbReference type="InterPro" id="IPR039220">
    <property type="entry name" value="FAM3"/>
</dbReference>
<dbReference type="InterPro" id="IPR039477">
    <property type="entry name" value="ILEI/PANDER_dom"/>
</dbReference>
<dbReference type="InterPro" id="IPR039475">
    <property type="entry name" value="ILEI_FAM3C"/>
</dbReference>
<dbReference type="PANTHER" id="PTHR14592">
    <property type="entry name" value="UNCHARACTERIZED FAM3"/>
    <property type="match status" value="1"/>
</dbReference>
<dbReference type="Pfam" id="PF15711">
    <property type="entry name" value="ILEI"/>
    <property type="match status" value="1"/>
</dbReference>
<dbReference type="PROSITE" id="PS52031">
    <property type="entry name" value="GG_LECTIN"/>
    <property type="match status" value="1"/>
</dbReference>
<organism>
    <name type="scientific">Homo sapiens</name>
    <name type="common">Human</name>
    <dbReference type="NCBI Taxonomy" id="9606"/>
    <lineage>
        <taxon>Eukaryota</taxon>
        <taxon>Metazoa</taxon>
        <taxon>Chordata</taxon>
        <taxon>Craniata</taxon>
        <taxon>Vertebrata</taxon>
        <taxon>Euteleostomi</taxon>
        <taxon>Mammalia</taxon>
        <taxon>Eutheria</taxon>
        <taxon>Euarchontoglires</taxon>
        <taxon>Primates</taxon>
        <taxon>Haplorrhini</taxon>
        <taxon>Catarrhini</taxon>
        <taxon>Hominidae</taxon>
        <taxon>Homo</taxon>
    </lineage>
</organism>
<gene>
    <name type="primary">FAM3D</name>
    <name type="ORF">UNQ567/PRO1130</name>
</gene>
<evidence type="ECO:0000250" key="1"/>
<evidence type="ECO:0000255" key="2"/>
<evidence type="ECO:0000255" key="3">
    <source>
        <dbReference type="PROSITE-ProRule" id="PRU01375"/>
    </source>
</evidence>
<evidence type="ECO:0000269" key="4">
    <source>
    </source>
</evidence>
<evidence type="ECO:0000269" key="5">
    <source>
    </source>
</evidence>
<evidence type="ECO:0000305" key="6"/>
<sequence length="224" mass="24963">MRVSGVLRLLALIFAIVTTWMFIRSYMSFSMKTIRLPRWLAASPTKEIQVKKYKCGLIKPCPANYFAFKICSGAANVVGPTMCFEDRMIMSPVKNNVGRGLNIALVNGTTGAVLGQKAFDMYSGDVMHLVKFLKEIPGGALVLVASYDDPGTKMNDESRKLFSDLGSSYAKQLGFRDSWVFIGAKDLRGKSPFEQFLKNSPDTNKYEGWPELLEMEGCMPPKPF</sequence>
<keyword id="KW-1015">Disulfide bond</keyword>
<keyword id="KW-0325">Glycoprotein</keyword>
<keyword id="KW-0430">Lectin</keyword>
<keyword id="KW-1267">Proteomics identification</keyword>
<keyword id="KW-1185">Reference proteome</keyword>
<keyword id="KW-0964">Secreted</keyword>
<keyword id="KW-0732">Signal</keyword>
<protein>
    <recommendedName>
        <fullName>Protein FAM3D</fullName>
    </recommendedName>
</protein>